<sequence>MAPLSTPESISREISVSSDASADESTSLDQMRAPKRRRLSESSTDSYTAAPAPLPSLSRIKKKSSSTNATSSRKDDENPVLIKDALEIGLNAEENSFKALNVAPWLVGSLTTMAVRKPTAIQRACIPEILKGRDCIGGSRTGSGKTIAFSVPILQKWAEDPFGIFAVILTPTRELALQIFEQIKAISAPQSMKPVLITGGTDMRSQAIELAGRPHVVVATPGRLADHINTSGTDTVAGLKRVRMVVLDEADRLLSPGPGSMLPDVETCLSFLPGPSQRQTLLFTATLTPEVRALKSMPQTPGKPPIFVTEISTEAKDTVPPTLRTTYVQVPLTHREAFLHVLLSTESNITKSAIVFTNTTKSADLLERLLRSLGHRVTSLHSLLPQSERNSNLARFRASAARVLVATDVASRGLDIPSVSLVVNFEVPRNPDDYVHRVGRTARAGRTGEAVTLVGQRDVQLVLAIEERIGRKMVEYEEEGVNLEARVAKGSLLKEVGAAKREAMVEIDEGRDVLGRKRNKLKKVR</sequence>
<reference key="1">
    <citation type="journal article" date="2005" name="Nature">
        <title>Sequencing of Aspergillus nidulans and comparative analysis with A. fumigatus and A. oryzae.</title>
        <authorList>
            <person name="Galagan J.E."/>
            <person name="Calvo S.E."/>
            <person name="Cuomo C."/>
            <person name="Ma L.-J."/>
            <person name="Wortman J.R."/>
            <person name="Batzoglou S."/>
            <person name="Lee S.-I."/>
            <person name="Bastuerkmen M."/>
            <person name="Spevak C.C."/>
            <person name="Clutterbuck J."/>
            <person name="Kapitonov V."/>
            <person name="Jurka J."/>
            <person name="Scazzocchio C."/>
            <person name="Farman M.L."/>
            <person name="Butler J."/>
            <person name="Purcell S."/>
            <person name="Harris S."/>
            <person name="Braus G.H."/>
            <person name="Draht O."/>
            <person name="Busch S."/>
            <person name="D'Enfert C."/>
            <person name="Bouchier C."/>
            <person name="Goldman G.H."/>
            <person name="Bell-Pedersen D."/>
            <person name="Griffiths-Jones S."/>
            <person name="Doonan J.H."/>
            <person name="Yu J."/>
            <person name="Vienken K."/>
            <person name="Pain A."/>
            <person name="Freitag M."/>
            <person name="Selker E.U."/>
            <person name="Archer D.B."/>
            <person name="Penalva M.A."/>
            <person name="Oakley B.R."/>
            <person name="Momany M."/>
            <person name="Tanaka T."/>
            <person name="Kumagai T."/>
            <person name="Asai K."/>
            <person name="Machida M."/>
            <person name="Nierman W.C."/>
            <person name="Denning D.W."/>
            <person name="Caddick M.X."/>
            <person name="Hynes M."/>
            <person name="Paoletti M."/>
            <person name="Fischer R."/>
            <person name="Miller B.L."/>
            <person name="Dyer P.S."/>
            <person name="Sachs M.S."/>
            <person name="Osmani S.A."/>
            <person name="Birren B.W."/>
        </authorList>
    </citation>
    <scope>NUCLEOTIDE SEQUENCE [LARGE SCALE GENOMIC DNA]</scope>
    <source>
        <strain>FGSC A4 / ATCC 38163 / CBS 112.46 / NRRL 194 / M139</strain>
    </source>
</reference>
<reference key="2">
    <citation type="journal article" date="2009" name="Fungal Genet. Biol.">
        <title>The 2008 update of the Aspergillus nidulans genome annotation: a community effort.</title>
        <authorList>
            <person name="Wortman J.R."/>
            <person name="Gilsenan J.M."/>
            <person name="Joardar V."/>
            <person name="Deegan J."/>
            <person name="Clutterbuck J."/>
            <person name="Andersen M.R."/>
            <person name="Archer D."/>
            <person name="Bencina M."/>
            <person name="Braus G."/>
            <person name="Coutinho P."/>
            <person name="von Dohren H."/>
            <person name="Doonan J."/>
            <person name="Driessen A.J."/>
            <person name="Durek P."/>
            <person name="Espeso E."/>
            <person name="Fekete E."/>
            <person name="Flipphi M."/>
            <person name="Estrada C.G."/>
            <person name="Geysens S."/>
            <person name="Goldman G."/>
            <person name="de Groot P.W."/>
            <person name="Hansen K."/>
            <person name="Harris S.D."/>
            <person name="Heinekamp T."/>
            <person name="Helmstaedt K."/>
            <person name="Henrissat B."/>
            <person name="Hofmann G."/>
            <person name="Homan T."/>
            <person name="Horio T."/>
            <person name="Horiuchi H."/>
            <person name="James S."/>
            <person name="Jones M."/>
            <person name="Karaffa L."/>
            <person name="Karanyi Z."/>
            <person name="Kato M."/>
            <person name="Keller N."/>
            <person name="Kelly D.E."/>
            <person name="Kiel J.A."/>
            <person name="Kim J.M."/>
            <person name="van der Klei I.J."/>
            <person name="Klis F.M."/>
            <person name="Kovalchuk A."/>
            <person name="Krasevec N."/>
            <person name="Kubicek C.P."/>
            <person name="Liu B."/>
            <person name="Maccabe A."/>
            <person name="Meyer V."/>
            <person name="Mirabito P."/>
            <person name="Miskei M."/>
            <person name="Mos M."/>
            <person name="Mullins J."/>
            <person name="Nelson D.R."/>
            <person name="Nielsen J."/>
            <person name="Oakley B.R."/>
            <person name="Osmani S.A."/>
            <person name="Pakula T."/>
            <person name="Paszewski A."/>
            <person name="Paulsen I."/>
            <person name="Pilsyk S."/>
            <person name="Pocsi I."/>
            <person name="Punt P.J."/>
            <person name="Ram A.F."/>
            <person name="Ren Q."/>
            <person name="Robellet X."/>
            <person name="Robson G."/>
            <person name="Seiboth B."/>
            <person name="van Solingen P."/>
            <person name="Specht T."/>
            <person name="Sun J."/>
            <person name="Taheri-Talesh N."/>
            <person name="Takeshita N."/>
            <person name="Ussery D."/>
            <person name="vanKuyk P.A."/>
            <person name="Visser H."/>
            <person name="van de Vondervoort P.J."/>
            <person name="de Vries R.P."/>
            <person name="Walton J."/>
            <person name="Xiang X."/>
            <person name="Xiong Y."/>
            <person name="Zeng A.P."/>
            <person name="Brandt B.W."/>
            <person name="Cornell M.J."/>
            <person name="van den Hondel C.A."/>
            <person name="Visser J."/>
            <person name="Oliver S.G."/>
            <person name="Turner G."/>
        </authorList>
    </citation>
    <scope>GENOME REANNOTATION</scope>
    <source>
        <strain>FGSC A4 / ATCC 38163 / CBS 112.46 / NRRL 194 / M139</strain>
    </source>
</reference>
<gene>
    <name type="primary">dbp8</name>
    <name type="ORF">AN4903</name>
</gene>
<name>DBP8_EMENI</name>
<keyword id="KW-0067">ATP-binding</keyword>
<keyword id="KW-0347">Helicase</keyword>
<keyword id="KW-0378">Hydrolase</keyword>
<keyword id="KW-0547">Nucleotide-binding</keyword>
<keyword id="KW-0539">Nucleus</keyword>
<keyword id="KW-1185">Reference proteome</keyword>
<keyword id="KW-0690">Ribosome biogenesis</keyword>
<keyword id="KW-0694">RNA-binding</keyword>
<keyword id="KW-0698">rRNA processing</keyword>
<accession>Q5B3H7</accession>
<accession>C8V9G6</accession>
<proteinExistence type="inferred from homology"/>
<protein>
    <recommendedName>
        <fullName>ATP-dependent RNA helicase dbp8</fullName>
        <ecNumber>3.6.4.13</ecNumber>
    </recommendedName>
</protein>
<comment type="function">
    <text evidence="1">ATP-binding RNA helicase involved in 40S ribosomal subunit biogenesis and is required for the normal formation of 18S rRNAs through pre-rRNA processing at A0, A1 and A2 sites. Required for vegetative growth (By similarity).</text>
</comment>
<comment type="catalytic activity">
    <reaction>
        <text>ATP + H2O = ADP + phosphate + H(+)</text>
        <dbReference type="Rhea" id="RHEA:13065"/>
        <dbReference type="ChEBI" id="CHEBI:15377"/>
        <dbReference type="ChEBI" id="CHEBI:15378"/>
        <dbReference type="ChEBI" id="CHEBI:30616"/>
        <dbReference type="ChEBI" id="CHEBI:43474"/>
        <dbReference type="ChEBI" id="CHEBI:456216"/>
        <dbReference type="EC" id="3.6.4.13"/>
    </reaction>
</comment>
<comment type="subcellular location">
    <subcellularLocation>
        <location evidence="1">Nucleus</location>
        <location evidence="1">Nucleolus</location>
    </subcellularLocation>
</comment>
<comment type="domain">
    <text>The Q motif is unique to and characteristic of the DEAD box family of RNA helicases and controls ATP binding and hydrolysis.</text>
</comment>
<comment type="similarity">
    <text evidence="5">Belongs to the DEAD box helicase family. DDX49/DBP8 subfamily.</text>
</comment>
<dbReference type="EC" id="3.6.4.13"/>
<dbReference type="EMBL" id="AACD01000084">
    <property type="protein sequence ID" value="EAA60981.1"/>
    <property type="molecule type" value="Genomic_DNA"/>
</dbReference>
<dbReference type="EMBL" id="BN001303">
    <property type="protein sequence ID" value="CBF76513.1"/>
    <property type="molecule type" value="Genomic_DNA"/>
</dbReference>
<dbReference type="RefSeq" id="XP_662507.1">
    <property type="nucleotide sequence ID" value="XM_657415.1"/>
</dbReference>
<dbReference type="SMR" id="Q5B3H7"/>
<dbReference type="FunCoup" id="Q5B3H7">
    <property type="interactions" value="803"/>
</dbReference>
<dbReference type="STRING" id="227321.Q5B3H7"/>
<dbReference type="EnsemblFungi" id="CBF76513">
    <property type="protein sequence ID" value="CBF76513"/>
    <property type="gene ID" value="ANIA_04903"/>
</dbReference>
<dbReference type="KEGG" id="ani:ANIA_04903"/>
<dbReference type="VEuPathDB" id="FungiDB:AN4903"/>
<dbReference type="eggNOG" id="KOG0340">
    <property type="taxonomic scope" value="Eukaryota"/>
</dbReference>
<dbReference type="HOGENOM" id="CLU_003041_1_1_1"/>
<dbReference type="InParanoid" id="Q5B3H7"/>
<dbReference type="OMA" id="IMIFTDT"/>
<dbReference type="OrthoDB" id="10261904at2759"/>
<dbReference type="Proteomes" id="UP000000560">
    <property type="component" value="Chromosome III"/>
</dbReference>
<dbReference type="GO" id="GO:0005730">
    <property type="term" value="C:nucleolus"/>
    <property type="evidence" value="ECO:0007669"/>
    <property type="project" value="UniProtKB-SubCell"/>
</dbReference>
<dbReference type="GO" id="GO:0005634">
    <property type="term" value="C:nucleus"/>
    <property type="evidence" value="ECO:0000318"/>
    <property type="project" value="GO_Central"/>
</dbReference>
<dbReference type="GO" id="GO:0005524">
    <property type="term" value="F:ATP binding"/>
    <property type="evidence" value="ECO:0007669"/>
    <property type="project" value="UniProtKB-KW"/>
</dbReference>
<dbReference type="GO" id="GO:0016887">
    <property type="term" value="F:ATP hydrolysis activity"/>
    <property type="evidence" value="ECO:0007669"/>
    <property type="project" value="RHEA"/>
</dbReference>
<dbReference type="GO" id="GO:0003723">
    <property type="term" value="F:RNA binding"/>
    <property type="evidence" value="ECO:0007669"/>
    <property type="project" value="UniProtKB-KW"/>
</dbReference>
<dbReference type="GO" id="GO:0003724">
    <property type="term" value="F:RNA helicase activity"/>
    <property type="evidence" value="ECO:0007669"/>
    <property type="project" value="UniProtKB-EC"/>
</dbReference>
<dbReference type="GO" id="GO:0006364">
    <property type="term" value="P:rRNA processing"/>
    <property type="evidence" value="ECO:0000318"/>
    <property type="project" value="GO_Central"/>
</dbReference>
<dbReference type="CDD" id="cd17955">
    <property type="entry name" value="DEADc_DDX49"/>
    <property type="match status" value="1"/>
</dbReference>
<dbReference type="CDD" id="cd18787">
    <property type="entry name" value="SF2_C_DEAD"/>
    <property type="match status" value="1"/>
</dbReference>
<dbReference type="Gene3D" id="3.40.50.300">
    <property type="entry name" value="P-loop containing nucleotide triphosphate hydrolases"/>
    <property type="match status" value="2"/>
</dbReference>
<dbReference type="InterPro" id="IPR011545">
    <property type="entry name" value="DEAD/DEAH_box_helicase_dom"/>
</dbReference>
<dbReference type="InterPro" id="IPR050079">
    <property type="entry name" value="DEAD_box_RNA_helicase"/>
</dbReference>
<dbReference type="InterPro" id="IPR014001">
    <property type="entry name" value="Helicase_ATP-bd"/>
</dbReference>
<dbReference type="InterPro" id="IPR001650">
    <property type="entry name" value="Helicase_C-like"/>
</dbReference>
<dbReference type="InterPro" id="IPR027417">
    <property type="entry name" value="P-loop_NTPase"/>
</dbReference>
<dbReference type="InterPro" id="IPR000629">
    <property type="entry name" value="RNA-helicase_DEAD-box_CS"/>
</dbReference>
<dbReference type="InterPro" id="IPR014014">
    <property type="entry name" value="RNA_helicase_DEAD_Q_motif"/>
</dbReference>
<dbReference type="PANTHER" id="PTHR47959:SF24">
    <property type="entry name" value="ATP-DEPENDENT RNA HELICASE"/>
    <property type="match status" value="1"/>
</dbReference>
<dbReference type="PANTHER" id="PTHR47959">
    <property type="entry name" value="ATP-DEPENDENT RNA HELICASE RHLE-RELATED"/>
    <property type="match status" value="1"/>
</dbReference>
<dbReference type="Pfam" id="PF00270">
    <property type="entry name" value="DEAD"/>
    <property type="match status" value="1"/>
</dbReference>
<dbReference type="Pfam" id="PF00271">
    <property type="entry name" value="Helicase_C"/>
    <property type="match status" value="1"/>
</dbReference>
<dbReference type="SMART" id="SM00487">
    <property type="entry name" value="DEXDc"/>
    <property type="match status" value="1"/>
</dbReference>
<dbReference type="SMART" id="SM00490">
    <property type="entry name" value="HELICc"/>
    <property type="match status" value="1"/>
</dbReference>
<dbReference type="SUPFAM" id="SSF52540">
    <property type="entry name" value="P-loop containing nucleoside triphosphate hydrolases"/>
    <property type="match status" value="1"/>
</dbReference>
<dbReference type="PROSITE" id="PS00039">
    <property type="entry name" value="DEAD_ATP_HELICASE"/>
    <property type="match status" value="1"/>
</dbReference>
<dbReference type="PROSITE" id="PS51192">
    <property type="entry name" value="HELICASE_ATP_BIND_1"/>
    <property type="match status" value="1"/>
</dbReference>
<dbReference type="PROSITE" id="PS51194">
    <property type="entry name" value="HELICASE_CTER"/>
    <property type="match status" value="1"/>
</dbReference>
<dbReference type="PROSITE" id="PS51195">
    <property type="entry name" value="Q_MOTIF"/>
    <property type="match status" value="1"/>
</dbReference>
<feature type="chain" id="PRO_0000232287" description="ATP-dependent RNA helicase dbp8">
    <location>
        <begin position="1"/>
        <end position="525"/>
    </location>
</feature>
<feature type="domain" description="Helicase ATP-binding" evidence="2">
    <location>
        <begin position="126"/>
        <end position="305"/>
    </location>
</feature>
<feature type="domain" description="Helicase C-terminal" evidence="3">
    <location>
        <begin position="337"/>
        <end position="484"/>
    </location>
</feature>
<feature type="region of interest" description="Disordered" evidence="4">
    <location>
        <begin position="1"/>
        <end position="76"/>
    </location>
</feature>
<feature type="short sequence motif" description="Q motif">
    <location>
        <begin position="95"/>
        <end position="123"/>
    </location>
</feature>
<feature type="short sequence motif" description="DEAD box">
    <location>
        <begin position="248"/>
        <end position="251"/>
    </location>
</feature>
<feature type="compositionally biased region" description="Polar residues" evidence="4">
    <location>
        <begin position="1"/>
        <end position="29"/>
    </location>
</feature>
<feature type="binding site" evidence="2">
    <location>
        <begin position="139"/>
        <end position="146"/>
    </location>
    <ligand>
        <name>ATP</name>
        <dbReference type="ChEBI" id="CHEBI:30616"/>
    </ligand>
</feature>
<organism>
    <name type="scientific">Emericella nidulans (strain FGSC A4 / ATCC 38163 / CBS 112.46 / NRRL 194 / M139)</name>
    <name type="common">Aspergillus nidulans</name>
    <dbReference type="NCBI Taxonomy" id="227321"/>
    <lineage>
        <taxon>Eukaryota</taxon>
        <taxon>Fungi</taxon>
        <taxon>Dikarya</taxon>
        <taxon>Ascomycota</taxon>
        <taxon>Pezizomycotina</taxon>
        <taxon>Eurotiomycetes</taxon>
        <taxon>Eurotiomycetidae</taxon>
        <taxon>Eurotiales</taxon>
        <taxon>Aspergillaceae</taxon>
        <taxon>Aspergillus</taxon>
        <taxon>Aspergillus subgen. Nidulantes</taxon>
    </lineage>
</organism>
<evidence type="ECO:0000250" key="1"/>
<evidence type="ECO:0000255" key="2">
    <source>
        <dbReference type="PROSITE-ProRule" id="PRU00541"/>
    </source>
</evidence>
<evidence type="ECO:0000255" key="3">
    <source>
        <dbReference type="PROSITE-ProRule" id="PRU00542"/>
    </source>
</evidence>
<evidence type="ECO:0000256" key="4">
    <source>
        <dbReference type="SAM" id="MobiDB-lite"/>
    </source>
</evidence>
<evidence type="ECO:0000305" key="5"/>